<accession>A4XL45</accession>
<sequence length="312" mass="35971">MQKIPLIVIAGLTATGKTDVAIELAQLIDGEIVSADSMCVYKYMDIGTAKPTKEQRQIVKHYVIDVVFPNEDYNVALFQKDATKAIDEIYQKGKIPLLVGGTGFYIKSIVDDIEFPEMGDSKQVRQNLYKELEEKGNMYLYEMLKNVDSKAAQSVHPNNVKRVIRYLEIYFLTGKKPTDFLEKVRKKGSKKYNILPLCFVMERSLLKERIDARVEKMFKIGLVDEVKMLLEMGYSKDLKSMQGLGYKQVIPYIEGNITLEEAKEELKLRTKQFAKRQSIWFKYQGDFIYLDVGNLEFKEVVKKCFELCKSVV</sequence>
<organism>
    <name type="scientific">Caldicellulosiruptor saccharolyticus (strain ATCC 43494 / DSM 8903 / Tp8T 6331)</name>
    <dbReference type="NCBI Taxonomy" id="351627"/>
    <lineage>
        <taxon>Bacteria</taxon>
        <taxon>Bacillati</taxon>
        <taxon>Bacillota</taxon>
        <taxon>Bacillota incertae sedis</taxon>
        <taxon>Caldicellulosiruptorales</taxon>
        <taxon>Caldicellulosiruptoraceae</taxon>
        <taxon>Caldicellulosiruptor</taxon>
    </lineage>
</organism>
<proteinExistence type="inferred from homology"/>
<gene>
    <name evidence="1" type="primary">miaA</name>
    <name type="ordered locus">Csac_2045</name>
</gene>
<dbReference type="EC" id="2.5.1.75" evidence="1"/>
<dbReference type="EMBL" id="CP000679">
    <property type="protein sequence ID" value="ABP67630.1"/>
    <property type="molecule type" value="Genomic_DNA"/>
</dbReference>
<dbReference type="SMR" id="A4XL45"/>
<dbReference type="STRING" id="351627.Csac_2045"/>
<dbReference type="KEGG" id="csc:Csac_2045"/>
<dbReference type="eggNOG" id="COG0324">
    <property type="taxonomic scope" value="Bacteria"/>
</dbReference>
<dbReference type="HOGENOM" id="CLU_032616_0_1_9"/>
<dbReference type="OrthoDB" id="9776390at2"/>
<dbReference type="Proteomes" id="UP000000256">
    <property type="component" value="Chromosome"/>
</dbReference>
<dbReference type="GO" id="GO:0005524">
    <property type="term" value="F:ATP binding"/>
    <property type="evidence" value="ECO:0007669"/>
    <property type="project" value="UniProtKB-UniRule"/>
</dbReference>
<dbReference type="GO" id="GO:0052381">
    <property type="term" value="F:tRNA dimethylallyltransferase activity"/>
    <property type="evidence" value="ECO:0007669"/>
    <property type="project" value="UniProtKB-UniRule"/>
</dbReference>
<dbReference type="GO" id="GO:0006400">
    <property type="term" value="P:tRNA modification"/>
    <property type="evidence" value="ECO:0007669"/>
    <property type="project" value="TreeGrafter"/>
</dbReference>
<dbReference type="Gene3D" id="1.10.20.140">
    <property type="match status" value="1"/>
</dbReference>
<dbReference type="Gene3D" id="3.40.50.300">
    <property type="entry name" value="P-loop containing nucleotide triphosphate hydrolases"/>
    <property type="match status" value="1"/>
</dbReference>
<dbReference type="HAMAP" id="MF_00185">
    <property type="entry name" value="IPP_trans"/>
    <property type="match status" value="1"/>
</dbReference>
<dbReference type="InterPro" id="IPR039657">
    <property type="entry name" value="Dimethylallyltransferase"/>
</dbReference>
<dbReference type="InterPro" id="IPR018022">
    <property type="entry name" value="IPT"/>
</dbReference>
<dbReference type="InterPro" id="IPR027417">
    <property type="entry name" value="P-loop_NTPase"/>
</dbReference>
<dbReference type="NCBIfam" id="TIGR00174">
    <property type="entry name" value="miaA"/>
    <property type="match status" value="1"/>
</dbReference>
<dbReference type="PANTHER" id="PTHR11088">
    <property type="entry name" value="TRNA DIMETHYLALLYLTRANSFERASE"/>
    <property type="match status" value="1"/>
</dbReference>
<dbReference type="PANTHER" id="PTHR11088:SF60">
    <property type="entry name" value="TRNA DIMETHYLALLYLTRANSFERASE"/>
    <property type="match status" value="1"/>
</dbReference>
<dbReference type="Pfam" id="PF01715">
    <property type="entry name" value="IPPT"/>
    <property type="match status" value="1"/>
</dbReference>
<dbReference type="SUPFAM" id="SSF52540">
    <property type="entry name" value="P-loop containing nucleoside triphosphate hydrolases"/>
    <property type="match status" value="2"/>
</dbReference>
<keyword id="KW-0067">ATP-binding</keyword>
<keyword id="KW-0460">Magnesium</keyword>
<keyword id="KW-0547">Nucleotide-binding</keyword>
<keyword id="KW-0808">Transferase</keyword>
<keyword id="KW-0819">tRNA processing</keyword>
<evidence type="ECO:0000255" key="1">
    <source>
        <dbReference type="HAMAP-Rule" id="MF_00185"/>
    </source>
</evidence>
<comment type="function">
    <text evidence="1">Catalyzes the transfer of a dimethylallyl group onto the adenine at position 37 in tRNAs that read codons beginning with uridine, leading to the formation of N6-(dimethylallyl)adenosine (i(6)A).</text>
</comment>
<comment type="catalytic activity">
    <reaction evidence="1">
        <text>adenosine(37) in tRNA + dimethylallyl diphosphate = N(6)-dimethylallyladenosine(37) in tRNA + diphosphate</text>
        <dbReference type="Rhea" id="RHEA:26482"/>
        <dbReference type="Rhea" id="RHEA-COMP:10162"/>
        <dbReference type="Rhea" id="RHEA-COMP:10375"/>
        <dbReference type="ChEBI" id="CHEBI:33019"/>
        <dbReference type="ChEBI" id="CHEBI:57623"/>
        <dbReference type="ChEBI" id="CHEBI:74411"/>
        <dbReference type="ChEBI" id="CHEBI:74415"/>
        <dbReference type="EC" id="2.5.1.75"/>
    </reaction>
</comment>
<comment type="cofactor">
    <cofactor evidence="1">
        <name>Mg(2+)</name>
        <dbReference type="ChEBI" id="CHEBI:18420"/>
    </cofactor>
</comment>
<comment type="subunit">
    <text evidence="1">Monomer.</text>
</comment>
<comment type="similarity">
    <text evidence="1">Belongs to the IPP transferase family.</text>
</comment>
<feature type="chain" id="PRO_0000377100" description="tRNA dimethylallyltransferase">
    <location>
        <begin position="1"/>
        <end position="312"/>
    </location>
</feature>
<feature type="region of interest" description="Interaction with substrate tRNA" evidence="1">
    <location>
        <begin position="36"/>
        <end position="39"/>
    </location>
</feature>
<feature type="binding site" evidence="1">
    <location>
        <begin position="11"/>
        <end position="18"/>
    </location>
    <ligand>
        <name>ATP</name>
        <dbReference type="ChEBI" id="CHEBI:30616"/>
    </ligand>
</feature>
<feature type="binding site" evidence="1">
    <location>
        <begin position="13"/>
        <end position="18"/>
    </location>
    <ligand>
        <name>substrate</name>
    </ligand>
</feature>
<feature type="site" description="Interaction with substrate tRNA" evidence="1">
    <location>
        <position position="102"/>
    </location>
</feature>
<feature type="site" description="Interaction with substrate tRNA" evidence="1">
    <location>
        <position position="125"/>
    </location>
</feature>
<reference key="1">
    <citation type="submission" date="2007-04" db="EMBL/GenBank/DDBJ databases">
        <title>Genome sequence of the thermophilic hydrogen-producing bacterium Caldicellulosiruptor saccharolyticus DSM 8903.</title>
        <authorList>
            <person name="Copeland A."/>
            <person name="Lucas S."/>
            <person name="Lapidus A."/>
            <person name="Barry K."/>
            <person name="Detter J.C."/>
            <person name="Glavina del Rio T."/>
            <person name="Hammon N."/>
            <person name="Israni S."/>
            <person name="Dalin E."/>
            <person name="Tice H."/>
            <person name="Pitluck S."/>
            <person name="Kiss H."/>
            <person name="Brettin T."/>
            <person name="Bruce D."/>
            <person name="Han C."/>
            <person name="Schmutz J."/>
            <person name="Larimer F."/>
            <person name="Land M."/>
            <person name="Hauser L."/>
            <person name="Kyrpides N."/>
            <person name="Lykidis A."/>
            <person name="van de Werken H.J.G."/>
            <person name="Verhaart M.R.A."/>
            <person name="VanFossen A.L."/>
            <person name="Lewis D.L."/>
            <person name="Nichols J.D."/>
            <person name="Goorissen H.P."/>
            <person name="van Niel E.W.J."/>
            <person name="Stams F.J.M."/>
            <person name="Willquist K.U."/>
            <person name="Ward D.E."/>
            <person name="van der Oost J."/>
            <person name="Kelly R.M."/>
            <person name="Kengen S.M.W."/>
            <person name="Richardson P."/>
        </authorList>
    </citation>
    <scope>NUCLEOTIDE SEQUENCE [LARGE SCALE GENOMIC DNA]</scope>
    <source>
        <strain>ATCC 43494 / DSM 8903 / Tp8T 6331</strain>
    </source>
</reference>
<protein>
    <recommendedName>
        <fullName evidence="1">tRNA dimethylallyltransferase</fullName>
        <ecNumber evidence="1">2.5.1.75</ecNumber>
    </recommendedName>
    <alternativeName>
        <fullName evidence="1">Dimethylallyl diphosphate:tRNA dimethylallyltransferase</fullName>
        <shortName evidence="1">DMAPP:tRNA dimethylallyltransferase</shortName>
        <shortName evidence="1">DMATase</shortName>
    </alternativeName>
    <alternativeName>
        <fullName evidence="1">Isopentenyl-diphosphate:tRNA isopentenyltransferase</fullName>
        <shortName evidence="1">IPP transferase</shortName>
        <shortName evidence="1">IPPT</shortName>
        <shortName evidence="1">IPTase</shortName>
    </alternativeName>
</protein>
<name>MIAA_CALS8</name>